<name>SPED_ECOSM</name>
<comment type="function">
    <text evidence="1">Catalyzes the decarboxylation of S-adenosylmethionine to S-adenosylmethioninamine (dcAdoMet), the propylamine donor required for the synthesis of the polyamines spermine and spermidine from the diamine putrescine.</text>
</comment>
<comment type="catalytic activity">
    <reaction evidence="1">
        <text>S-adenosyl-L-methionine + H(+) = S-adenosyl 3-(methylsulfanyl)propylamine + CO2</text>
        <dbReference type="Rhea" id="RHEA:15981"/>
        <dbReference type="ChEBI" id="CHEBI:15378"/>
        <dbReference type="ChEBI" id="CHEBI:16526"/>
        <dbReference type="ChEBI" id="CHEBI:57443"/>
        <dbReference type="ChEBI" id="CHEBI:59789"/>
        <dbReference type="EC" id="4.1.1.50"/>
    </reaction>
</comment>
<comment type="cofactor">
    <cofactor evidence="1">
        <name>pyruvate</name>
        <dbReference type="ChEBI" id="CHEBI:15361"/>
    </cofactor>
    <text evidence="1">Binds 1 pyruvoyl group covalently per subunit.</text>
</comment>
<comment type="pathway">
    <text evidence="1">Amine and polyamine biosynthesis; S-adenosylmethioninamine biosynthesis; S-adenosylmethioninamine from S-adenosyl-L-methionine: step 1/1.</text>
</comment>
<comment type="subunit">
    <text evidence="1">Heterooctamer of four alpha and four beta chains arranged as a tetramer of alpha/beta heterodimers.</text>
</comment>
<comment type="PTM">
    <text evidence="1">Is synthesized initially as an inactive proenzyme. Formation of the active enzyme involves a self-maturation process in which the active site pyruvoyl group is generated from an internal serine residue via an autocatalytic post-translational modification. Two non-identical subunits are generated from the proenzyme in this reaction, and the pyruvate is formed at the N-terminus of the alpha chain, which is derived from the carboxyl end of the proenzyme. The post-translation cleavage follows an unusual pathway, termed non-hydrolytic serinolysis, in which the side chain hydroxyl group of the serine supplies its oxygen atom to form the C-terminus of the beta chain, while the remainder of the serine residue undergoes an oxidative deamination to produce ammonia and the pyruvoyl group blocking the N-terminus of the alpha chain.</text>
</comment>
<comment type="similarity">
    <text evidence="1">Belongs to the prokaryotic AdoMetDC family. Type 2 subfamily.</text>
</comment>
<organism>
    <name type="scientific">Escherichia coli (strain SMS-3-5 / SECEC)</name>
    <dbReference type="NCBI Taxonomy" id="439855"/>
    <lineage>
        <taxon>Bacteria</taxon>
        <taxon>Pseudomonadati</taxon>
        <taxon>Pseudomonadota</taxon>
        <taxon>Gammaproteobacteria</taxon>
        <taxon>Enterobacterales</taxon>
        <taxon>Enterobacteriaceae</taxon>
        <taxon>Escherichia</taxon>
    </lineage>
</organism>
<dbReference type="EC" id="4.1.1.50" evidence="1"/>
<dbReference type="EMBL" id="CP000970">
    <property type="protein sequence ID" value="ACB18517.1"/>
    <property type="molecule type" value="Genomic_DNA"/>
</dbReference>
<dbReference type="RefSeq" id="WP_000734287.1">
    <property type="nucleotide sequence ID" value="NC_010498.1"/>
</dbReference>
<dbReference type="GeneID" id="93777316"/>
<dbReference type="KEGG" id="ecm:EcSMS35_0130"/>
<dbReference type="HOGENOM" id="CLU_092007_0_0_6"/>
<dbReference type="UniPathway" id="UPA00331">
    <property type="reaction ID" value="UER00451"/>
</dbReference>
<dbReference type="Proteomes" id="UP000007011">
    <property type="component" value="Chromosome"/>
</dbReference>
<dbReference type="GO" id="GO:0005829">
    <property type="term" value="C:cytosol"/>
    <property type="evidence" value="ECO:0007669"/>
    <property type="project" value="TreeGrafter"/>
</dbReference>
<dbReference type="GO" id="GO:0004014">
    <property type="term" value="F:adenosylmethionine decarboxylase activity"/>
    <property type="evidence" value="ECO:0007669"/>
    <property type="project" value="UniProtKB-UniRule"/>
</dbReference>
<dbReference type="GO" id="GO:0008295">
    <property type="term" value="P:spermidine biosynthetic process"/>
    <property type="evidence" value="ECO:0007669"/>
    <property type="project" value="UniProtKB-UniRule"/>
</dbReference>
<dbReference type="FunFam" id="3.60.90.10:FF:000001">
    <property type="entry name" value="S-adenosylmethionine decarboxylase proenzyme"/>
    <property type="match status" value="1"/>
</dbReference>
<dbReference type="Gene3D" id="3.60.90.10">
    <property type="entry name" value="S-adenosylmethionine decarboxylase"/>
    <property type="match status" value="1"/>
</dbReference>
<dbReference type="HAMAP" id="MF_00465">
    <property type="entry name" value="AdoMetDC_2"/>
    <property type="match status" value="1"/>
</dbReference>
<dbReference type="InterPro" id="IPR003826">
    <property type="entry name" value="AdoMetDC_fam_prok"/>
</dbReference>
<dbReference type="InterPro" id="IPR009165">
    <property type="entry name" value="S-AdoMet_deCO2ase_bac"/>
</dbReference>
<dbReference type="InterPro" id="IPR016067">
    <property type="entry name" value="S-AdoMet_deCO2ase_core"/>
</dbReference>
<dbReference type="NCBIfam" id="TIGR03331">
    <property type="entry name" value="SAM_DCase_Eco"/>
    <property type="match status" value="1"/>
</dbReference>
<dbReference type="PANTHER" id="PTHR33866">
    <property type="entry name" value="S-ADENOSYLMETHIONINE DECARBOXYLASE PROENZYME"/>
    <property type="match status" value="1"/>
</dbReference>
<dbReference type="PANTHER" id="PTHR33866:SF1">
    <property type="entry name" value="S-ADENOSYLMETHIONINE DECARBOXYLASE PROENZYME"/>
    <property type="match status" value="1"/>
</dbReference>
<dbReference type="Pfam" id="PF02675">
    <property type="entry name" value="AdoMet_dc"/>
    <property type="match status" value="1"/>
</dbReference>
<dbReference type="PIRSF" id="PIRSF001356">
    <property type="entry name" value="SAM_decarboxylas"/>
    <property type="match status" value="1"/>
</dbReference>
<dbReference type="SUPFAM" id="SSF56276">
    <property type="entry name" value="S-adenosylmethionine decarboxylase"/>
    <property type="match status" value="1"/>
</dbReference>
<feature type="chain" id="PRO_0000364375" description="S-adenosylmethionine decarboxylase beta chain" evidence="1">
    <location>
        <begin position="1"/>
        <end position="111"/>
    </location>
</feature>
<feature type="chain" id="PRO_0000364376" description="S-adenosylmethionine decarboxylase alpha chain" evidence="1">
    <location>
        <begin position="112"/>
        <end position="264"/>
    </location>
</feature>
<feature type="active site" description="Schiff-base intermediate with substrate; via pyruvic acid" evidence="1">
    <location>
        <position position="112"/>
    </location>
</feature>
<feature type="active site" description="Proton acceptor; for processing activity" evidence="1">
    <location>
        <position position="117"/>
    </location>
</feature>
<feature type="active site" description="Proton donor; for catalytic activity" evidence="1">
    <location>
        <position position="140"/>
    </location>
</feature>
<feature type="site" description="Cleavage (non-hydrolytic); by autolysis" evidence="1">
    <location>
        <begin position="111"/>
        <end position="112"/>
    </location>
</feature>
<feature type="modified residue" description="Pyruvic acid (Ser); by autocatalysis" evidence="1">
    <location>
        <position position="112"/>
    </location>
</feature>
<gene>
    <name evidence="1" type="primary">speD</name>
    <name type="ordered locus">EcSMS35_0130</name>
</gene>
<sequence>MKKLKLHGFNNLTKSLSFCIYDICYAKTAEERDGYIAYIDELYNANRLTEILSETCSIIGANILNIARQDYEPQGASVTILVSEEPVDPKLIDKTEHPGPLPETVVAHLDKSHICVHTYPESHPEGGLCTFRADIEVSTCGVISPLKALNYLIHQLESDIVTIDYRVRGFTRDINGMKHFIDHEINSIQNFMSDDMKALYDMVDVNVYQENIFHTKMLLKEFDLKHYMFHTKPEDLTDSERQEITAALWKEMREIYYGRNMPAV</sequence>
<protein>
    <recommendedName>
        <fullName evidence="1">S-adenosylmethionine decarboxylase proenzyme</fullName>
        <shortName evidence="1">AdoMetDC</shortName>
        <shortName evidence="1">SAMDC</shortName>
        <ecNumber evidence="1">4.1.1.50</ecNumber>
    </recommendedName>
    <component>
        <recommendedName>
            <fullName evidence="1">S-adenosylmethionine decarboxylase beta chain</fullName>
        </recommendedName>
    </component>
    <component>
        <recommendedName>
            <fullName evidence="1">S-adenosylmethionine decarboxylase alpha chain</fullName>
        </recommendedName>
    </component>
</protein>
<reference key="1">
    <citation type="journal article" date="2008" name="J. Bacteriol.">
        <title>Insights into the environmental resistance gene pool from the genome sequence of the multidrug-resistant environmental isolate Escherichia coli SMS-3-5.</title>
        <authorList>
            <person name="Fricke W.F."/>
            <person name="Wright M.S."/>
            <person name="Lindell A.H."/>
            <person name="Harkins D.M."/>
            <person name="Baker-Austin C."/>
            <person name="Ravel J."/>
            <person name="Stepanauskas R."/>
        </authorList>
    </citation>
    <scope>NUCLEOTIDE SEQUENCE [LARGE SCALE GENOMIC DNA]</scope>
    <source>
        <strain>SMS-3-5 / SECEC</strain>
    </source>
</reference>
<evidence type="ECO:0000255" key="1">
    <source>
        <dbReference type="HAMAP-Rule" id="MF_00465"/>
    </source>
</evidence>
<accession>B1LGS1</accession>
<keyword id="KW-0068">Autocatalytic cleavage</keyword>
<keyword id="KW-0210">Decarboxylase</keyword>
<keyword id="KW-0456">Lyase</keyword>
<keyword id="KW-0620">Polyamine biosynthesis</keyword>
<keyword id="KW-0670">Pyruvate</keyword>
<keyword id="KW-0949">S-adenosyl-L-methionine</keyword>
<keyword id="KW-0704">Schiff base</keyword>
<keyword id="KW-0745">Spermidine biosynthesis</keyword>
<keyword id="KW-0865">Zymogen</keyword>
<proteinExistence type="inferred from homology"/>